<keyword id="KW-0233">DNA recombination</keyword>
<keyword id="KW-0238">DNA-binding</keyword>
<keyword id="KW-1185">Reference proteome</keyword>
<keyword id="KW-0814">Transposable element</keyword>
<keyword id="KW-0815">Transposition</keyword>
<accession>P0CF45</accession>
<accession>O07989</accession>
<accession>O08018</accession>
<accession>O08019</accession>
<accession>P0C5W2</accession>
<accession>P19776</accession>
<accession>P76357</accession>
<accession>P77346</accession>
<accession>Q2MBI5</accession>
<accession>Q2MC65</accession>
<accession>Q79BJ2</accession>
<accession>Q9JMT0</accession>
<proteinExistence type="inferred from homology"/>
<protein>
    <recommendedName>
        <fullName>Transposase InsC for insertion element IS2K</fullName>
    </recommendedName>
</protein>
<comment type="function">
    <text>Involved in the transposition of the insertion sequence IS2.</text>
</comment>
<comment type="similarity">
    <text evidence="1">Belongs to the transposase 8 family.</text>
</comment>
<comment type="sequence caution" evidence="1">
    <conflict type="erroneous initiation">
        <sequence resource="EMBL-CDS" id="AAA97168"/>
    </conflict>
    <text>Extended N-terminus.</text>
</comment>
<comment type="sequence caution" evidence="1">
    <conflict type="erroneous initiation">
        <sequence resource="EMBL-CDS" id="BAE78268"/>
    </conflict>
    <text>Extended N-terminus.</text>
</comment>
<sequence>MIDVLGPEKRRRRTTQEKIAIVQQSFEPGMTVSLVARQHGVAASQLFLWRKQYQEGSLTAVAAGEQVVPASELAAAMKQIKELQRLLGKKTMENELLKEAVEYGRAKKWIAHAPLLPGDGE</sequence>
<dbReference type="EMBL" id="U14003">
    <property type="protein sequence ID" value="AAA97168.1"/>
    <property type="status" value="ALT_INIT"/>
    <property type="molecule type" value="Genomic_DNA"/>
</dbReference>
<dbReference type="EMBL" id="U00096">
    <property type="protein sequence ID" value="AAC77228.2"/>
    <property type="molecule type" value="Genomic_DNA"/>
</dbReference>
<dbReference type="EMBL" id="AP009048">
    <property type="protein sequence ID" value="BAE78268.1"/>
    <property type="status" value="ALT_INIT"/>
    <property type="molecule type" value="Genomic_DNA"/>
</dbReference>
<dbReference type="PIR" id="B65240">
    <property type="entry name" value="B65240"/>
</dbReference>
<dbReference type="RefSeq" id="NP_418692.2">
    <property type="nucleotide sequence ID" value="NC_000913.3"/>
</dbReference>
<dbReference type="SMR" id="P0CF45"/>
<dbReference type="FunCoup" id="P0CF45">
    <property type="interactions" value="56"/>
</dbReference>
<dbReference type="jPOST" id="P0CF45"/>
<dbReference type="EnsemblBacteria" id="AAC77228">
    <property type="protein sequence ID" value="AAC77228"/>
    <property type="gene ID" value="b4272"/>
</dbReference>
<dbReference type="GeneID" id="948781"/>
<dbReference type="KEGG" id="ecj:JW4229"/>
<dbReference type="KEGG" id="eco:b0360"/>
<dbReference type="KEGG" id="eco:b1403"/>
<dbReference type="KEGG" id="eco:b1997"/>
<dbReference type="KEGG" id="eco:b2861"/>
<dbReference type="KEGG" id="eco:b3044"/>
<dbReference type="KEGG" id="eco:b4272"/>
<dbReference type="KEGG" id="ecoc:C3026_00670"/>
<dbReference type="KEGG" id="ecoc:C3026_03840"/>
<dbReference type="KEGG" id="ecoc:C3026_06235"/>
<dbReference type="KEGG" id="ecoc:C3026_08180"/>
<dbReference type="KEGG" id="ecoc:C3026_09100"/>
<dbReference type="KEGG" id="ecoc:C3026_11265"/>
<dbReference type="KEGG" id="ecoc:C3026_15305"/>
<dbReference type="KEGG" id="ecoc:C3026_15700"/>
<dbReference type="KEGG" id="ecoc:C3026_16625"/>
<dbReference type="KEGG" id="ecoc:C3026_20340"/>
<dbReference type="KEGG" id="ecoc:C3026_23040"/>
<dbReference type="KEGG" id="ecoc:C3026_24220"/>
<dbReference type="PATRIC" id="fig|511145.12.peg.1466"/>
<dbReference type="EchoBASE" id="EB4711"/>
<dbReference type="HOGENOM" id="CLU_027402_25_0_6"/>
<dbReference type="InParanoid" id="P0CF45"/>
<dbReference type="PhylomeDB" id="P0CF45"/>
<dbReference type="BioCyc" id="EcoCyc:MONOMER0-4254"/>
<dbReference type="PRO" id="PR:P0CF45"/>
<dbReference type="Proteomes" id="UP000000625">
    <property type="component" value="Chromosome"/>
</dbReference>
<dbReference type="GO" id="GO:0003677">
    <property type="term" value="F:DNA binding"/>
    <property type="evidence" value="ECO:0007669"/>
    <property type="project" value="UniProtKB-KW"/>
</dbReference>
<dbReference type="GO" id="GO:0004803">
    <property type="term" value="F:transposase activity"/>
    <property type="evidence" value="ECO:0007669"/>
    <property type="project" value="InterPro"/>
</dbReference>
<dbReference type="GO" id="GO:0006313">
    <property type="term" value="P:DNA transposition"/>
    <property type="evidence" value="ECO:0007669"/>
    <property type="project" value="InterPro"/>
</dbReference>
<dbReference type="Gene3D" id="1.10.10.10">
    <property type="entry name" value="Winged helix-like DNA-binding domain superfamily/Winged helix DNA-binding domain"/>
    <property type="match status" value="1"/>
</dbReference>
<dbReference type="InterPro" id="IPR009057">
    <property type="entry name" value="Homeodomain-like_sf"/>
</dbReference>
<dbReference type="InterPro" id="IPR002514">
    <property type="entry name" value="Transposase_8"/>
</dbReference>
<dbReference type="InterPro" id="IPR036388">
    <property type="entry name" value="WH-like_DNA-bd_sf"/>
</dbReference>
<dbReference type="NCBIfam" id="NF006928">
    <property type="entry name" value="PRK09413.1"/>
    <property type="match status" value="1"/>
</dbReference>
<dbReference type="PANTHER" id="PTHR37936">
    <property type="entry name" value="TRANSPOSASE INSC FOR INSERTION ELEMENT IS2A-RELATED"/>
    <property type="match status" value="1"/>
</dbReference>
<dbReference type="PANTHER" id="PTHR37936:SF3">
    <property type="entry name" value="TRANSPOSASE INSC FOR INSERTION ELEMENT IS2A-RELATED"/>
    <property type="match status" value="1"/>
</dbReference>
<dbReference type="Pfam" id="PF01527">
    <property type="entry name" value="HTH_Tnp_1"/>
    <property type="match status" value="1"/>
</dbReference>
<dbReference type="SUPFAM" id="SSF46689">
    <property type="entry name" value="Homeodomain-like"/>
    <property type="match status" value="1"/>
</dbReference>
<name>INSC6_ECOLI</name>
<organism>
    <name type="scientific">Escherichia coli (strain K12)</name>
    <dbReference type="NCBI Taxonomy" id="83333"/>
    <lineage>
        <taxon>Bacteria</taxon>
        <taxon>Pseudomonadati</taxon>
        <taxon>Pseudomonadota</taxon>
        <taxon>Gammaproteobacteria</taxon>
        <taxon>Enterobacterales</taxon>
        <taxon>Enterobacteriaceae</taxon>
        <taxon>Escherichia</taxon>
    </lineage>
</organism>
<gene>
    <name type="primary">insC6</name>
    <name type="ordered locus">b4272</name>
    <name type="ordered locus">JW4229</name>
</gene>
<feature type="chain" id="PRO_0000393453" description="Transposase InsC for insertion element IS2K">
    <location>
        <begin position="1"/>
        <end position="121"/>
    </location>
</feature>
<reference key="1">
    <citation type="journal article" date="1995" name="Nucleic Acids Res.">
        <title>Analysis of the Escherichia coli genome VI: DNA sequence of the region from 92.8 through 100 minutes.</title>
        <authorList>
            <person name="Burland V.D."/>
            <person name="Plunkett G. III"/>
            <person name="Sofia H.J."/>
            <person name="Daniels D.L."/>
            <person name="Blattner F.R."/>
        </authorList>
    </citation>
    <scope>NUCLEOTIDE SEQUENCE [LARGE SCALE GENOMIC DNA]</scope>
    <source>
        <strain>K12 / MG1655 / ATCC 47076</strain>
    </source>
</reference>
<reference key="2">
    <citation type="journal article" date="1997" name="Science">
        <title>The complete genome sequence of Escherichia coli K-12.</title>
        <authorList>
            <person name="Blattner F.R."/>
            <person name="Plunkett G. III"/>
            <person name="Bloch C.A."/>
            <person name="Perna N.T."/>
            <person name="Burland V."/>
            <person name="Riley M."/>
            <person name="Collado-Vides J."/>
            <person name="Glasner J.D."/>
            <person name="Rode C.K."/>
            <person name="Mayhew G.F."/>
            <person name="Gregor J."/>
            <person name="Davis N.W."/>
            <person name="Kirkpatrick H.A."/>
            <person name="Goeden M.A."/>
            <person name="Rose D.J."/>
            <person name="Mau B."/>
            <person name="Shao Y."/>
        </authorList>
    </citation>
    <scope>NUCLEOTIDE SEQUENCE [LARGE SCALE GENOMIC DNA]</scope>
    <source>
        <strain>K12 / MG1655 / ATCC 47076</strain>
    </source>
</reference>
<reference key="3">
    <citation type="journal article" date="2006" name="Mol. Syst. Biol.">
        <title>Highly accurate genome sequences of Escherichia coli K-12 strains MG1655 and W3110.</title>
        <authorList>
            <person name="Hayashi K."/>
            <person name="Morooka N."/>
            <person name="Yamamoto Y."/>
            <person name="Fujita K."/>
            <person name="Isono K."/>
            <person name="Choi S."/>
            <person name="Ohtsubo E."/>
            <person name="Baba T."/>
            <person name="Wanner B.L."/>
            <person name="Mori H."/>
            <person name="Horiuchi T."/>
        </authorList>
    </citation>
    <scope>NUCLEOTIDE SEQUENCE [LARGE SCALE GENOMIC DNA]</scope>
    <source>
        <strain>K12 / W3110 / ATCC 27325 / DSM 5911</strain>
    </source>
</reference>
<evidence type="ECO:0000305" key="1"/>